<organism>
    <name type="scientific">Mycoplasmopsis synoviae (strain 53)</name>
    <name type="common">Mycoplasma synoviae</name>
    <dbReference type="NCBI Taxonomy" id="262723"/>
    <lineage>
        <taxon>Bacteria</taxon>
        <taxon>Bacillati</taxon>
        <taxon>Mycoplasmatota</taxon>
        <taxon>Mycoplasmoidales</taxon>
        <taxon>Metamycoplasmataceae</taxon>
        <taxon>Mycoplasmopsis</taxon>
    </lineage>
</organism>
<protein>
    <recommendedName>
        <fullName evidence="1">Putative pre-16S rRNA nuclease</fullName>
        <ecNumber evidence="1">3.1.-.-</ecNumber>
    </recommendedName>
</protein>
<proteinExistence type="inferred from homology"/>
<reference key="1">
    <citation type="journal article" date="2005" name="J. Bacteriol.">
        <title>Swine and poultry pathogens: the complete genome sequences of two strains of Mycoplasma hyopneumoniae and a strain of Mycoplasma synoviae.</title>
        <authorList>
            <person name="Vasconcelos A.T.R."/>
            <person name="Ferreira H.B."/>
            <person name="Bizarro C.V."/>
            <person name="Bonatto S.L."/>
            <person name="Carvalho M.O."/>
            <person name="Pinto P.M."/>
            <person name="Almeida D.F."/>
            <person name="Almeida L.G.P."/>
            <person name="Almeida R."/>
            <person name="Alves-Junior L."/>
            <person name="Assuncao E.N."/>
            <person name="Azevedo V.A.C."/>
            <person name="Bogo M.R."/>
            <person name="Brigido M.M."/>
            <person name="Brocchi M."/>
            <person name="Burity H.A."/>
            <person name="Camargo A.A."/>
            <person name="Camargo S.S."/>
            <person name="Carepo M.S."/>
            <person name="Carraro D.M."/>
            <person name="de Mattos Cascardo J.C."/>
            <person name="Castro L.A."/>
            <person name="Cavalcanti G."/>
            <person name="Chemale G."/>
            <person name="Collevatti R.G."/>
            <person name="Cunha C.W."/>
            <person name="Dallagiovanna B."/>
            <person name="Dambros B.P."/>
            <person name="Dellagostin O.A."/>
            <person name="Falcao C."/>
            <person name="Fantinatti-Garboggini F."/>
            <person name="Felipe M.S.S."/>
            <person name="Fiorentin L."/>
            <person name="Franco G.R."/>
            <person name="Freitas N.S.A."/>
            <person name="Frias D."/>
            <person name="Grangeiro T.B."/>
            <person name="Grisard E.C."/>
            <person name="Guimaraes C.T."/>
            <person name="Hungria M."/>
            <person name="Jardim S.N."/>
            <person name="Krieger M.A."/>
            <person name="Laurino J.P."/>
            <person name="Lima L.F.A."/>
            <person name="Lopes M.I."/>
            <person name="Loreto E.L.S."/>
            <person name="Madeira H.M.F."/>
            <person name="Manfio G.P."/>
            <person name="Maranhao A.Q."/>
            <person name="Martinkovics C.T."/>
            <person name="Medeiros S.R.B."/>
            <person name="Moreira M.A.M."/>
            <person name="Neiva M."/>
            <person name="Ramalho-Neto C.E."/>
            <person name="Nicolas M.F."/>
            <person name="Oliveira S.C."/>
            <person name="Paixao R.F.C."/>
            <person name="Pedrosa F.O."/>
            <person name="Pena S.D.J."/>
            <person name="Pereira M."/>
            <person name="Pereira-Ferrari L."/>
            <person name="Piffer I."/>
            <person name="Pinto L.S."/>
            <person name="Potrich D.P."/>
            <person name="Salim A.C.M."/>
            <person name="Santos F.R."/>
            <person name="Schmitt R."/>
            <person name="Schneider M.P.C."/>
            <person name="Schrank A."/>
            <person name="Schrank I.S."/>
            <person name="Schuck A.F."/>
            <person name="Seuanez H.N."/>
            <person name="Silva D.W."/>
            <person name="Silva R."/>
            <person name="Silva S.C."/>
            <person name="Soares C.M.A."/>
            <person name="Souza K.R.L."/>
            <person name="Souza R.C."/>
            <person name="Staats C.C."/>
            <person name="Steffens M.B.R."/>
            <person name="Teixeira S.M.R."/>
            <person name="Urmenyi T.P."/>
            <person name="Vainstein M.H."/>
            <person name="Zuccherato L.W."/>
            <person name="Simpson A.J.G."/>
            <person name="Zaha A."/>
        </authorList>
    </citation>
    <scope>NUCLEOTIDE SEQUENCE [LARGE SCALE GENOMIC DNA]</scope>
    <source>
        <strain>53</strain>
    </source>
</reference>
<accession>Q4A632</accession>
<evidence type="ECO:0000255" key="1">
    <source>
        <dbReference type="HAMAP-Rule" id="MF_00651"/>
    </source>
</evidence>
<sequence length="137" mass="16022">MRKLGIDFGLSRIGFAISDESNSFSLALENFDYDGSYEKIIQKIQLFLDEYKIDKFIIGYPLNSRGEKTKTCLLIDEFIIHLEKNFDQKIKLINESYSSRKASEILHQANIKNKKQKDKKDMLAAKIILQDYLDLYK</sequence>
<keyword id="KW-0963">Cytoplasm</keyword>
<keyword id="KW-0378">Hydrolase</keyword>
<keyword id="KW-0540">Nuclease</keyword>
<keyword id="KW-1185">Reference proteome</keyword>
<keyword id="KW-0690">Ribosome biogenesis</keyword>
<dbReference type="EC" id="3.1.-.-" evidence="1"/>
<dbReference type="EMBL" id="AE017245">
    <property type="protein sequence ID" value="AAZ43789.2"/>
    <property type="molecule type" value="Genomic_DNA"/>
</dbReference>
<dbReference type="RefSeq" id="WP_041351963.1">
    <property type="nucleotide sequence ID" value="NC_007294.1"/>
</dbReference>
<dbReference type="SMR" id="Q4A632"/>
<dbReference type="STRING" id="262723.MS53_0377"/>
<dbReference type="KEGG" id="msy:MS53_0377"/>
<dbReference type="eggNOG" id="COG0816">
    <property type="taxonomic scope" value="Bacteria"/>
</dbReference>
<dbReference type="HOGENOM" id="CLU_098240_2_2_14"/>
<dbReference type="OrthoDB" id="9796140at2"/>
<dbReference type="Proteomes" id="UP000000549">
    <property type="component" value="Chromosome"/>
</dbReference>
<dbReference type="GO" id="GO:0005829">
    <property type="term" value="C:cytosol"/>
    <property type="evidence" value="ECO:0007669"/>
    <property type="project" value="TreeGrafter"/>
</dbReference>
<dbReference type="GO" id="GO:0004518">
    <property type="term" value="F:nuclease activity"/>
    <property type="evidence" value="ECO:0007669"/>
    <property type="project" value="UniProtKB-KW"/>
</dbReference>
<dbReference type="GO" id="GO:0000967">
    <property type="term" value="P:rRNA 5'-end processing"/>
    <property type="evidence" value="ECO:0007669"/>
    <property type="project" value="UniProtKB-UniRule"/>
</dbReference>
<dbReference type="CDD" id="cd16964">
    <property type="entry name" value="YqgF"/>
    <property type="match status" value="1"/>
</dbReference>
<dbReference type="Gene3D" id="3.30.420.140">
    <property type="entry name" value="YqgF/RNase H-like domain"/>
    <property type="match status" value="1"/>
</dbReference>
<dbReference type="HAMAP" id="MF_00651">
    <property type="entry name" value="Nuclease_YqgF"/>
    <property type="match status" value="1"/>
</dbReference>
<dbReference type="InterPro" id="IPR012337">
    <property type="entry name" value="RNaseH-like_sf"/>
</dbReference>
<dbReference type="InterPro" id="IPR005227">
    <property type="entry name" value="YqgF"/>
</dbReference>
<dbReference type="InterPro" id="IPR006641">
    <property type="entry name" value="YqgF/RNaseH-like_dom"/>
</dbReference>
<dbReference type="InterPro" id="IPR037027">
    <property type="entry name" value="YqgF/RNaseH-like_dom_sf"/>
</dbReference>
<dbReference type="NCBIfam" id="TIGR00250">
    <property type="entry name" value="RNAse_H_YqgF"/>
    <property type="match status" value="1"/>
</dbReference>
<dbReference type="PANTHER" id="PTHR33317">
    <property type="entry name" value="POLYNUCLEOTIDYL TRANSFERASE, RIBONUCLEASE H-LIKE SUPERFAMILY PROTEIN"/>
    <property type="match status" value="1"/>
</dbReference>
<dbReference type="PANTHER" id="PTHR33317:SF4">
    <property type="entry name" value="POLYNUCLEOTIDYL TRANSFERASE, RIBONUCLEASE H-LIKE SUPERFAMILY PROTEIN"/>
    <property type="match status" value="1"/>
</dbReference>
<dbReference type="Pfam" id="PF03652">
    <property type="entry name" value="RuvX"/>
    <property type="match status" value="1"/>
</dbReference>
<dbReference type="SMART" id="SM00732">
    <property type="entry name" value="YqgFc"/>
    <property type="match status" value="1"/>
</dbReference>
<dbReference type="SUPFAM" id="SSF53098">
    <property type="entry name" value="Ribonuclease H-like"/>
    <property type="match status" value="1"/>
</dbReference>
<gene>
    <name type="ordered locus">MS53_0377</name>
</gene>
<feature type="chain" id="PRO_1000061536" description="Putative pre-16S rRNA nuclease">
    <location>
        <begin position="1"/>
        <end position="137"/>
    </location>
</feature>
<name>YQGF_MYCS5</name>
<comment type="function">
    <text evidence="1">Could be a nuclease involved in processing of the 5'-end of pre-16S rRNA.</text>
</comment>
<comment type="subcellular location">
    <subcellularLocation>
        <location evidence="1">Cytoplasm</location>
    </subcellularLocation>
</comment>
<comment type="similarity">
    <text evidence="1">Belongs to the YqgF nuclease family.</text>
</comment>